<evidence type="ECO:0000255" key="1">
    <source>
        <dbReference type="HAMAP-Rule" id="MF_00354"/>
    </source>
</evidence>
<evidence type="ECO:0000269" key="2">
    <source>
    </source>
</evidence>
<evidence type="ECO:0000269" key="3">
    <source ref="3"/>
</evidence>
<evidence type="ECO:0000269" key="4">
    <source ref="4"/>
</evidence>
<evidence type="ECO:0000305" key="5">
    <source ref="3"/>
</evidence>
<evidence type="ECO:0000305" key="6">
    <source ref="4"/>
</evidence>
<evidence type="ECO:0007829" key="7">
    <source>
        <dbReference type="PDB" id="1VCF"/>
    </source>
</evidence>
<evidence type="ECO:0007829" key="8">
    <source>
        <dbReference type="PDB" id="1VCG"/>
    </source>
</evidence>
<feature type="chain" id="PRO_0000430350" description="Isopentenyl-diphosphate delta-isomerase">
    <location>
        <begin position="1"/>
        <end position="332"/>
    </location>
</feature>
<feature type="binding site" evidence="1">
    <location>
        <begin position="6"/>
        <end position="7"/>
    </location>
    <ligand>
        <name>substrate</name>
    </ligand>
</feature>
<feature type="binding site" evidence="1 3 4">
    <location>
        <begin position="65"/>
        <end position="67"/>
    </location>
    <ligand>
        <name>FMN</name>
        <dbReference type="ChEBI" id="CHEBI:58210"/>
    </ligand>
</feature>
<feature type="binding site" evidence="1">
    <location>
        <begin position="95"/>
        <end position="97"/>
    </location>
    <ligand>
        <name>substrate</name>
    </ligand>
</feature>
<feature type="binding site" evidence="1 3 4">
    <location>
        <position position="95"/>
    </location>
    <ligand>
        <name>FMN</name>
        <dbReference type="ChEBI" id="CHEBI:58210"/>
    </ligand>
</feature>
<feature type="binding site" evidence="1 3 4">
    <location>
        <position position="123"/>
    </location>
    <ligand>
        <name>FMN</name>
        <dbReference type="ChEBI" id="CHEBI:58210"/>
    </ligand>
</feature>
<feature type="binding site" evidence="1">
    <location>
        <position position="157"/>
    </location>
    <ligand>
        <name>substrate</name>
    </ligand>
</feature>
<feature type="binding site" evidence="1">
    <location>
        <position position="158"/>
    </location>
    <ligand>
        <name>Mg(2+)</name>
        <dbReference type="ChEBI" id="CHEBI:18420"/>
    </ligand>
</feature>
<feature type="binding site" evidence="1 3 4">
    <location>
        <position position="187"/>
    </location>
    <ligand>
        <name>FMN</name>
        <dbReference type="ChEBI" id="CHEBI:58210"/>
    </ligand>
</feature>
<feature type="binding site" evidence="1 3 4">
    <location>
        <position position="217"/>
    </location>
    <ligand>
        <name>FMN</name>
        <dbReference type="ChEBI" id="CHEBI:58210"/>
    </ligand>
</feature>
<feature type="binding site" evidence="1 3 4">
    <location>
        <begin position="264"/>
        <end position="266"/>
    </location>
    <ligand>
        <name>FMN</name>
        <dbReference type="ChEBI" id="CHEBI:58210"/>
    </ligand>
</feature>
<feature type="binding site" evidence="5 6">
    <location>
        <begin position="285"/>
        <end position="286"/>
    </location>
    <ligand>
        <name>FMN</name>
        <dbReference type="ChEBI" id="CHEBI:58210"/>
    </ligand>
</feature>
<feature type="binding site" evidence="1 3 4">
    <location>
        <position position="285"/>
    </location>
    <ligand>
        <name>FMN</name>
        <dbReference type="ChEBI" id="CHEBI:58210"/>
    </ligand>
</feature>
<feature type="helix" evidence="8">
    <location>
        <begin position="10"/>
        <end position="16"/>
    </location>
</feature>
<feature type="helix" evidence="7">
    <location>
        <begin position="28"/>
        <end position="30"/>
    </location>
</feature>
<feature type="strand" evidence="7">
    <location>
        <begin position="31"/>
        <end position="33"/>
    </location>
</feature>
<feature type="helix" evidence="7">
    <location>
        <begin position="43"/>
        <end position="45"/>
    </location>
</feature>
<feature type="strand" evidence="7">
    <location>
        <begin position="50"/>
        <end position="52"/>
    </location>
</feature>
<feature type="strand" evidence="7">
    <location>
        <begin position="55"/>
        <end position="63"/>
    </location>
</feature>
<feature type="helix" evidence="7">
    <location>
        <begin position="73"/>
        <end position="87"/>
    </location>
</feature>
<feature type="strand" evidence="7">
    <location>
        <begin position="90"/>
        <end position="95"/>
    </location>
</feature>
<feature type="helix" evidence="7">
    <location>
        <begin position="97"/>
        <end position="101"/>
    </location>
</feature>
<feature type="turn" evidence="7">
    <location>
        <begin position="103"/>
        <end position="105"/>
    </location>
</feature>
<feature type="helix" evidence="7">
    <location>
        <begin position="106"/>
        <end position="109"/>
    </location>
</feature>
<feature type="turn" evidence="7">
    <location>
        <begin position="112"/>
        <end position="114"/>
    </location>
</feature>
<feature type="strand" evidence="7">
    <location>
        <begin position="116"/>
        <end position="118"/>
    </location>
</feature>
<feature type="strand" evidence="7">
    <location>
        <begin position="120"/>
        <end position="125"/>
    </location>
</feature>
<feature type="helix" evidence="7">
    <location>
        <begin position="126"/>
        <end position="130"/>
    </location>
</feature>
<feature type="helix" evidence="7">
    <location>
        <begin position="134"/>
        <end position="144"/>
    </location>
</feature>
<feature type="strand" evidence="7">
    <location>
        <begin position="147"/>
        <end position="152"/>
    </location>
</feature>
<feature type="helix" evidence="7">
    <location>
        <begin position="155"/>
        <end position="160"/>
    </location>
</feature>
<feature type="helix" evidence="7">
    <location>
        <begin position="170"/>
        <end position="177"/>
    </location>
</feature>
<feature type="strand" evidence="7">
    <location>
        <begin position="184"/>
        <end position="187"/>
    </location>
</feature>
<feature type="strand" evidence="7">
    <location>
        <begin position="189"/>
        <end position="191"/>
    </location>
</feature>
<feature type="helix" evidence="7">
    <location>
        <begin position="195"/>
        <end position="201"/>
    </location>
</feature>
<feature type="strand" evidence="7">
    <location>
        <begin position="207"/>
        <end position="210"/>
    </location>
</feature>
<feature type="helix" evidence="7">
    <location>
        <begin position="219"/>
        <end position="224"/>
    </location>
</feature>
<feature type="helix" evidence="8">
    <location>
        <begin position="234"/>
        <end position="237"/>
    </location>
</feature>
<feature type="helix" evidence="7">
    <location>
        <begin position="243"/>
        <end position="253"/>
    </location>
</feature>
<feature type="strand" evidence="7">
    <location>
        <begin position="255"/>
        <end position="257"/>
    </location>
</feature>
<feature type="strand" evidence="7">
    <location>
        <begin position="259"/>
        <end position="264"/>
    </location>
</feature>
<feature type="helix" evidence="7">
    <location>
        <begin position="268"/>
        <end position="277"/>
    </location>
</feature>
<feature type="strand" evidence="7">
    <location>
        <begin position="280"/>
        <end position="284"/>
    </location>
</feature>
<feature type="helix" evidence="7">
    <location>
        <begin position="286"/>
        <end position="288"/>
    </location>
</feature>
<feature type="helix" evidence="7">
    <location>
        <begin position="289"/>
        <end position="292"/>
    </location>
</feature>
<feature type="helix" evidence="7">
    <location>
        <begin position="296"/>
        <end position="317"/>
    </location>
</feature>
<feature type="helix" evidence="7">
    <location>
        <begin position="322"/>
        <end position="325"/>
    </location>
</feature>
<feature type="strand" evidence="7">
    <location>
        <begin position="329"/>
        <end position="331"/>
    </location>
</feature>
<comment type="function">
    <text evidence="1 2">Involved in the biosynthesis of isoprenoids. Catalyzes the 1,3-allylic rearrangement of the homoallylic substrate isopentenyl (IPP) to its allylic isomer, dimethylallyl diphosphate (DMAPP).</text>
</comment>
<comment type="catalytic activity">
    <reaction evidence="1 2">
        <text>isopentenyl diphosphate = dimethylallyl diphosphate</text>
        <dbReference type="Rhea" id="RHEA:23284"/>
        <dbReference type="ChEBI" id="CHEBI:57623"/>
        <dbReference type="ChEBI" id="CHEBI:128769"/>
        <dbReference type="EC" id="5.3.3.2"/>
    </reaction>
</comment>
<comment type="cofactor">
    <cofactor evidence="1 2">
        <name>FMN</name>
        <dbReference type="ChEBI" id="CHEBI:58210"/>
    </cofactor>
</comment>
<comment type="cofactor">
    <cofactor evidence="1 2">
        <name>NADPH</name>
        <dbReference type="ChEBI" id="CHEBI:57783"/>
    </cofactor>
</comment>
<comment type="cofactor">
    <cofactor evidence="1 2">
        <name>Mg(2+)</name>
        <dbReference type="ChEBI" id="CHEBI:18420"/>
    </cofactor>
</comment>
<comment type="activity regulation">
    <text evidence="2">Competitively inhibited by N,N-dimethyl-2-amino-1-ethyl diphosphate (NIPP) and isopentyl diphosphate.</text>
</comment>
<comment type="biophysicochemical properties">
    <kinetics>
        <KM evidence="2">5.6 uM for IPP (at pH 7.6 and 37 degrees Celsius)</KM>
        <text>kcat is 17.9 sec(-1) for isomerase activity with IPP (at pH 7.6 and 37 degrees Celsius).</text>
    </kinetics>
    <temperatureDependence>
        <text evidence="2">Optimum temperature is 60 degrees Celsius.</text>
    </temperatureDependence>
</comment>
<comment type="subunit">
    <text evidence="1 3 4">Homooctamer. Dimer of tetramers.</text>
</comment>
<comment type="subcellular location">
    <subcellularLocation>
        <location evidence="1">Cytoplasm</location>
    </subcellularLocation>
</comment>
<comment type="similarity">
    <text evidence="1">Belongs to the IPP isomerase type 2 family.</text>
</comment>
<protein>
    <recommendedName>
        <fullName evidence="1">Isopentenyl-diphosphate delta-isomerase</fullName>
        <shortName evidence="1">IPP isomerase</shortName>
        <ecNumber evidence="1">5.3.3.2</ecNumber>
    </recommendedName>
    <alternativeName>
        <fullName evidence="1">Isopentenyl diphosphate:dimethylallyl diphosphate isomerase</fullName>
    </alternativeName>
    <alternativeName>
        <fullName evidence="1">Isopentenyl pyrophosphate isomerase</fullName>
    </alternativeName>
    <alternativeName>
        <fullName evidence="1">Type 2 isopentenyl diphosphate isomerase</fullName>
        <shortName evidence="1">IDI-2</shortName>
    </alternativeName>
</protein>
<geneLocation type="plasmid">
    <name>pTT27</name>
</geneLocation>
<reference key="1">
    <citation type="journal article" date="2004" name="Nat. Biotechnol.">
        <title>The genome sequence of the extreme thermophile Thermus thermophilus.</title>
        <authorList>
            <person name="Henne A."/>
            <person name="Brueggemann H."/>
            <person name="Raasch C."/>
            <person name="Wiezer A."/>
            <person name="Hartsch T."/>
            <person name="Liesegang H."/>
            <person name="Johann A."/>
            <person name="Lienard T."/>
            <person name="Gohl O."/>
            <person name="Martinez-Arias R."/>
            <person name="Jacobi C."/>
            <person name="Starkuviene V."/>
            <person name="Schlenczeck S."/>
            <person name="Dencker S."/>
            <person name="Huber R."/>
            <person name="Klenk H.-P."/>
            <person name="Kramer W."/>
            <person name="Merkl R."/>
            <person name="Gottschalk G."/>
            <person name="Fritz H.-J."/>
        </authorList>
    </citation>
    <scope>NUCLEOTIDE SEQUENCE [LARGE SCALE GENOMIC DNA]</scope>
    <source>
        <strain>ATCC BAA-163 / DSM 7039 / HB27</strain>
        <plasmid>pTT27</plasmid>
    </source>
</reference>
<reference key="2">
    <citation type="journal article" date="2007" name="Biochemistry">
        <title>Kinetic and spectroscopic characterization of type II isopentenyl diphosphate isomerase from Thermus thermophilus: evidence for formation of substrate-induced flavin species.</title>
        <authorList>
            <person name="Rothman S.C."/>
            <person name="Helm T.R."/>
            <person name="Poulter C.D."/>
        </authorList>
    </citation>
    <scope>FUNCTION</scope>
    <scope>CATALYTIC ACTIVITY</scope>
    <scope>BIOPHYSICOCHEMICAL PROPERTIES</scope>
    <scope>ACTIVITY REGULATION</scope>
    <scope>MASS SPECTROMETRY</scope>
    <scope>COFACTOR</scope>
    <source>
        <strain>ATCC BAA-163 / DSM 7039 / HB27</strain>
    </source>
</reference>
<reference key="3">
    <citation type="submission" date="2004-03" db="PDB data bank">
        <title>Crystal Structure of IPP isomerase at I422.</title>
        <authorList>
            <person name="Wada T."/>
            <person name="Park S.-Y."/>
            <person name="Tame R.H."/>
            <person name="Kuramitsu S."/>
            <person name="Yokoyama S."/>
        </authorList>
    </citation>
    <scope>X-RAY CRYSTALLOGRAPHY (2.60 ANGSTROMS) IN COMPLEX WITH FMN</scope>
    <scope>SUBUNIT</scope>
</reference>
<reference key="4">
    <citation type="submission" date="2004-03" db="PDB data bank">
        <title>Crystal Structure of IPP isomerase at P43212.</title>
        <authorList>
            <person name="Wada T."/>
            <person name="Park S.-Y."/>
            <person name="Tame R.H."/>
            <person name="Kuramitsu S."/>
            <person name="Yokoyama S."/>
        </authorList>
    </citation>
    <scope>X-RAY CRYSTALLOGRAPHY (3.02 ANGSTROMS) IN COMPLEX WITH FMN</scope>
    <scope>SUBUNIT</scope>
</reference>
<name>IDI2_THET2</name>
<keyword id="KW-0002">3D-structure</keyword>
<keyword id="KW-0104">Cadmium</keyword>
<keyword id="KW-0963">Cytoplasm</keyword>
<keyword id="KW-0285">Flavoprotein</keyword>
<keyword id="KW-0288">FMN</keyword>
<keyword id="KW-0413">Isomerase</keyword>
<keyword id="KW-0414">Isoprene biosynthesis</keyword>
<keyword id="KW-0460">Magnesium</keyword>
<keyword id="KW-0479">Metal-binding</keyword>
<keyword id="KW-0521">NADP</keyword>
<keyword id="KW-0547">Nucleotide-binding</keyword>
<keyword id="KW-0614">Plasmid</keyword>
<organism>
    <name type="scientific">Thermus thermophilus (strain ATCC BAA-163 / DSM 7039 / HB27)</name>
    <dbReference type="NCBI Taxonomy" id="262724"/>
    <lineage>
        <taxon>Bacteria</taxon>
        <taxon>Thermotogati</taxon>
        <taxon>Deinococcota</taxon>
        <taxon>Deinococci</taxon>
        <taxon>Thermales</taxon>
        <taxon>Thermaceae</taxon>
        <taxon>Thermus</taxon>
    </lineage>
</organism>
<accession>Q746I8</accession>
<dbReference type="EC" id="5.3.3.2" evidence="1"/>
<dbReference type="EMBL" id="AE017222">
    <property type="protein sequence ID" value="AAS82397.1"/>
    <property type="molecule type" value="Genomic_DNA"/>
</dbReference>
<dbReference type="RefSeq" id="WP_011174493.1">
    <property type="nucleotide sequence ID" value="NC_005838.1"/>
</dbReference>
<dbReference type="PDB" id="1VCF">
    <property type="method" value="X-ray"/>
    <property type="resolution" value="2.60 A"/>
    <property type="chains" value="A/B=1-332"/>
</dbReference>
<dbReference type="PDB" id="1VCG">
    <property type="method" value="X-ray"/>
    <property type="resolution" value="3.02 A"/>
    <property type="chains" value="A/B/C/D=1-332"/>
</dbReference>
<dbReference type="PDBsum" id="1VCF"/>
<dbReference type="PDBsum" id="1VCG"/>
<dbReference type="SMR" id="Q746I8"/>
<dbReference type="DrugBank" id="DB03247">
    <property type="generic name" value="Flavin mononucleotide"/>
</dbReference>
<dbReference type="KEGG" id="tth:TT_P0067"/>
<dbReference type="eggNOG" id="COG1304">
    <property type="taxonomic scope" value="Bacteria"/>
</dbReference>
<dbReference type="HOGENOM" id="CLU_065515_1_0_0"/>
<dbReference type="OrthoDB" id="9795032at2"/>
<dbReference type="EvolutionaryTrace" id="Q746I8"/>
<dbReference type="Proteomes" id="UP000000592">
    <property type="component" value="Plasmid pTT27"/>
</dbReference>
<dbReference type="GO" id="GO:0005737">
    <property type="term" value="C:cytoplasm"/>
    <property type="evidence" value="ECO:0007669"/>
    <property type="project" value="UniProtKB-SubCell"/>
</dbReference>
<dbReference type="GO" id="GO:0010181">
    <property type="term" value="F:FMN binding"/>
    <property type="evidence" value="ECO:0007669"/>
    <property type="project" value="UniProtKB-UniRule"/>
</dbReference>
<dbReference type="GO" id="GO:0004452">
    <property type="term" value="F:isopentenyl-diphosphate delta-isomerase activity"/>
    <property type="evidence" value="ECO:0007669"/>
    <property type="project" value="UniProtKB-UniRule"/>
</dbReference>
<dbReference type="GO" id="GO:0000287">
    <property type="term" value="F:magnesium ion binding"/>
    <property type="evidence" value="ECO:0007669"/>
    <property type="project" value="UniProtKB-UniRule"/>
</dbReference>
<dbReference type="GO" id="GO:0070402">
    <property type="term" value="F:NADPH binding"/>
    <property type="evidence" value="ECO:0007669"/>
    <property type="project" value="UniProtKB-UniRule"/>
</dbReference>
<dbReference type="GO" id="GO:0016491">
    <property type="term" value="F:oxidoreductase activity"/>
    <property type="evidence" value="ECO:0007669"/>
    <property type="project" value="InterPro"/>
</dbReference>
<dbReference type="GO" id="GO:0008299">
    <property type="term" value="P:isoprenoid biosynthetic process"/>
    <property type="evidence" value="ECO:0007669"/>
    <property type="project" value="UniProtKB-UniRule"/>
</dbReference>
<dbReference type="CDD" id="cd02811">
    <property type="entry name" value="IDI-2_FMN"/>
    <property type="match status" value="1"/>
</dbReference>
<dbReference type="Gene3D" id="3.20.20.70">
    <property type="entry name" value="Aldolase class I"/>
    <property type="match status" value="1"/>
</dbReference>
<dbReference type="HAMAP" id="MF_00354">
    <property type="entry name" value="Idi_2"/>
    <property type="match status" value="1"/>
</dbReference>
<dbReference type="InterPro" id="IPR013785">
    <property type="entry name" value="Aldolase_TIM"/>
</dbReference>
<dbReference type="InterPro" id="IPR000262">
    <property type="entry name" value="FMN-dep_DH"/>
</dbReference>
<dbReference type="InterPro" id="IPR011179">
    <property type="entry name" value="IPdP_isomerase"/>
</dbReference>
<dbReference type="NCBIfam" id="TIGR02151">
    <property type="entry name" value="IPP_isom_2"/>
    <property type="match status" value="1"/>
</dbReference>
<dbReference type="PANTHER" id="PTHR43665">
    <property type="entry name" value="ISOPENTENYL-DIPHOSPHATE DELTA-ISOMERASE"/>
    <property type="match status" value="1"/>
</dbReference>
<dbReference type="PANTHER" id="PTHR43665:SF1">
    <property type="entry name" value="ISOPENTENYL-DIPHOSPHATE DELTA-ISOMERASE"/>
    <property type="match status" value="1"/>
</dbReference>
<dbReference type="Pfam" id="PF01070">
    <property type="entry name" value="FMN_dh"/>
    <property type="match status" value="2"/>
</dbReference>
<dbReference type="PIRSF" id="PIRSF003314">
    <property type="entry name" value="IPP_isomerase"/>
    <property type="match status" value="1"/>
</dbReference>
<dbReference type="SUPFAM" id="SSF51395">
    <property type="entry name" value="FMN-linked oxidoreductases"/>
    <property type="match status" value="1"/>
</dbReference>
<sequence length="332" mass="35901">MNIRERKRKHLEACLEGEVAYQKTTTGLEGFRLRYQALAGLALGEVDLTTPFLGKTLKAPFLIGAMTGGEENGERINLALAEAAEALGVGMMLGSGRILLERPEALRSFRVRKVAPKALLIANLGLAQLRRYGRDDLLRLVEALEADALAFHVNPLQEAVQRGDTDFRGLVERLAELLPLPFPVMVKEVGHGLSREAALALRDLPLAAVDVAGAGGTSWARVEEWVRFGEVRHPELCEIGIPTARAILEVREVLPHLPLVASGGVYTGTDGAKALALGADLLAVARPLLRPALEGAERVAAWIGDYLEELRTALFAIGAKNPKEARGRVERV</sequence>
<proteinExistence type="evidence at protein level"/>
<gene>
    <name evidence="1" type="primary">fni</name>
    <name type="ordered locus">TT_P0067</name>
</gene>